<proteinExistence type="inferred from homology"/>
<organism>
    <name type="scientific">Bifidobacterium longum (strain NCC 2705)</name>
    <dbReference type="NCBI Taxonomy" id="206672"/>
    <lineage>
        <taxon>Bacteria</taxon>
        <taxon>Bacillati</taxon>
        <taxon>Actinomycetota</taxon>
        <taxon>Actinomycetes</taxon>
        <taxon>Bifidobacteriales</taxon>
        <taxon>Bifidobacteriaceae</taxon>
        <taxon>Bifidobacterium</taxon>
    </lineage>
</organism>
<gene>
    <name evidence="1" type="primary">lpqB</name>
    <name type="ordered locus">BL0032</name>
</gene>
<name>LPQB_BIFLO</name>
<comment type="subcellular location">
    <subcellularLocation>
        <location evidence="1">Cell membrane</location>
        <topology evidence="1">Lipid-anchor</topology>
    </subcellularLocation>
</comment>
<comment type="similarity">
    <text evidence="1">Belongs to the LpqB lipoprotein family.</text>
</comment>
<reference key="1">
    <citation type="journal article" date="2002" name="Proc. Natl. Acad. Sci. U.S.A.">
        <title>The genome sequence of Bifidobacterium longum reflects its adaptation to the human gastrointestinal tract.</title>
        <authorList>
            <person name="Schell M.A."/>
            <person name="Karmirantzou M."/>
            <person name="Snel B."/>
            <person name="Vilanova D."/>
            <person name="Berger B."/>
            <person name="Pessi G."/>
            <person name="Zwahlen M.-C."/>
            <person name="Desiere F."/>
            <person name="Bork P."/>
            <person name="Delley M."/>
            <person name="Pridmore R.D."/>
            <person name="Arigoni F."/>
        </authorList>
    </citation>
    <scope>NUCLEOTIDE SEQUENCE [LARGE SCALE GENOMIC DNA]</scope>
    <source>
        <strain>NCC 2705</strain>
    </source>
</reference>
<feature type="signal peptide" evidence="1">
    <location>
        <begin position="1"/>
        <end position="16"/>
    </location>
</feature>
<feature type="chain" id="PRO_0000286713" description="Lipoprotein LpqB">
    <location>
        <begin position="17"/>
        <end position="576"/>
    </location>
</feature>
<feature type="lipid moiety-binding region" description="N-palmitoyl cysteine" evidence="1">
    <location>
        <position position="17"/>
    </location>
</feature>
<feature type="lipid moiety-binding region" description="S-diacylglycerol cysteine" evidence="1">
    <location>
        <position position="17"/>
    </location>
</feature>
<evidence type="ECO:0000255" key="1">
    <source>
        <dbReference type="HAMAP-Rule" id="MF_01373"/>
    </source>
</evidence>
<dbReference type="EMBL" id="AE014295">
    <property type="protein sequence ID" value="AAN23899.1"/>
    <property type="molecule type" value="Genomic_DNA"/>
</dbReference>
<dbReference type="RefSeq" id="NP_695263.1">
    <property type="nucleotide sequence ID" value="NC_004307.2"/>
</dbReference>
<dbReference type="RefSeq" id="WP_011067925.1">
    <property type="nucleotide sequence ID" value="NC_004307.2"/>
</dbReference>
<dbReference type="STRING" id="206672.BL0032"/>
<dbReference type="EnsemblBacteria" id="AAN23899">
    <property type="protein sequence ID" value="AAN23899"/>
    <property type="gene ID" value="BL0032"/>
</dbReference>
<dbReference type="KEGG" id="blo:BL0032"/>
<dbReference type="PATRIC" id="fig|206672.9.peg.34"/>
<dbReference type="HOGENOM" id="CLU_032207_1_0_11"/>
<dbReference type="OrthoDB" id="3226781at2"/>
<dbReference type="Proteomes" id="UP000000439">
    <property type="component" value="Chromosome"/>
</dbReference>
<dbReference type="GO" id="GO:0005886">
    <property type="term" value="C:plasma membrane"/>
    <property type="evidence" value="ECO:0007669"/>
    <property type="project" value="UniProtKB-SubCell"/>
</dbReference>
<dbReference type="HAMAP" id="MF_01373">
    <property type="entry name" value="LpqB_lipoprot"/>
    <property type="match status" value="1"/>
</dbReference>
<dbReference type="InterPro" id="IPR023959">
    <property type="entry name" value="Lipoprotein_LpqB"/>
</dbReference>
<dbReference type="InterPro" id="IPR018910">
    <property type="entry name" value="Lipoprotein_LpqB_C"/>
</dbReference>
<dbReference type="Pfam" id="PF10647">
    <property type="entry name" value="Gmad1"/>
    <property type="match status" value="1"/>
</dbReference>
<dbReference type="SUPFAM" id="SSF63829">
    <property type="entry name" value="Calcium-dependent phosphotriesterase"/>
    <property type="match status" value="1"/>
</dbReference>
<dbReference type="PROSITE" id="PS51257">
    <property type="entry name" value="PROKAR_LIPOPROTEIN"/>
    <property type="match status" value="1"/>
</dbReference>
<protein>
    <recommendedName>
        <fullName evidence="1">Lipoprotein LpqB</fullName>
    </recommendedName>
</protein>
<keyword id="KW-1003">Cell membrane</keyword>
<keyword id="KW-0449">Lipoprotein</keyword>
<keyword id="KW-0472">Membrane</keyword>
<keyword id="KW-0564">Palmitate</keyword>
<keyword id="KW-1185">Reference proteome</keyword>
<keyword id="KW-0732">Signal</keyword>
<sequence length="576" mass="60979">MRRVTRTIAAAGAAIACCVTMTACSSPFDLPISGSVQTLAPVEQQTQRVYTNPQGPADDAQPETIVKGFYDAMPAGVQSDGYRVAREFLTGSASAGWNGDSAALVYSGTPDFRRRANTISAPQGAESSLIVEVELQVVGSLDSHGVYTPSNSTQTRRLPYTLMKKSGQWRISSLESGVVISTADFEQVFRQVSVYQVSTSGKQLIPDIRWLSWRNWRTQAVGEVLSDAPSWLEGVLRGAGLSTIKLAVDSVPVKNNVVEIHLNSGINALNEEERGLLVHRIRLTMGDGNAEYALRITGDGVDYSDADANVKLTTEQPTAGVYTLTGGHIVSLASSSPLRVGEAPGYDDARGFVFSSSGGAVLRADGVVECLKSDGASCGVMFSGEPMRSITEGLDGEVWAVSENGRELHVSDGGKETDLKLDWLGAADSIVALAVSPEGCRLALAVEGEDTNGVMMTGVARNGDKTLSGLSKAATQVSVLRHVTMLTFYNDLNLVYATTPPEGNSEQQEAWRQMAPGPANAQRLPNGIITSMASGQISLSRRLAIVDDLGIVRSVSGSLDGSWTIADSQVTALGAQ</sequence>
<accession>Q8G849</accession>